<comment type="function">
    <text evidence="1">Involved in the modulation of the activity of the glucose-phosphotransferase system (glucose-PTS). Interacts with the transcriptional repressor Mlc, preventing its interaction with DNA and leading to the modulation of expression of genes regulated by Mlc, including ptsG, which encodes the PTS system glucose-specific EIICB component.</text>
</comment>
<comment type="function">
    <text evidence="1">Shows zinc-dependent metallopeptidase activity.</text>
</comment>
<comment type="cofactor">
    <cofactor evidence="1">
        <name>Zn(2+)</name>
        <dbReference type="ChEBI" id="CHEBI:29105"/>
    </cofactor>
    <text evidence="1">Binds 1 zinc ion per subunit.</text>
</comment>
<comment type="subunit">
    <text evidence="1">Interacts with Mlc.</text>
</comment>
<comment type="subcellular location">
    <subcellularLocation>
        <location evidence="1">Cytoplasm</location>
    </subcellularLocation>
</comment>
<comment type="similarity">
    <text evidence="1">Belongs to the MtfA family.</text>
</comment>
<evidence type="ECO:0000255" key="1">
    <source>
        <dbReference type="HAMAP-Rule" id="MF_01593"/>
    </source>
</evidence>
<protein>
    <recommendedName>
        <fullName evidence="1">Mlc titration factor A</fullName>
    </recommendedName>
    <alternativeName>
        <fullName evidence="1">Probable zinc metallopeptidase MtfA</fullName>
        <ecNumber evidence="1">3.4.11.-</ecNumber>
    </alternativeName>
</protein>
<keyword id="KW-0031">Aminopeptidase</keyword>
<keyword id="KW-0963">Cytoplasm</keyword>
<keyword id="KW-0378">Hydrolase</keyword>
<keyword id="KW-0479">Metal-binding</keyword>
<keyword id="KW-0482">Metalloprotease</keyword>
<keyword id="KW-0645">Protease</keyword>
<keyword id="KW-0862">Zinc</keyword>
<organism>
    <name type="scientific">Yersinia pseudotuberculosis serotype IB (strain PB1/+)</name>
    <dbReference type="NCBI Taxonomy" id="502801"/>
    <lineage>
        <taxon>Bacteria</taxon>
        <taxon>Pseudomonadati</taxon>
        <taxon>Pseudomonadota</taxon>
        <taxon>Gammaproteobacteria</taxon>
        <taxon>Enterobacterales</taxon>
        <taxon>Yersiniaceae</taxon>
        <taxon>Yersinia</taxon>
    </lineage>
</organism>
<reference key="1">
    <citation type="submission" date="2008-04" db="EMBL/GenBank/DDBJ databases">
        <title>Complete sequence of Yersinia pseudotuberculosis PB1/+.</title>
        <authorList>
            <person name="Copeland A."/>
            <person name="Lucas S."/>
            <person name="Lapidus A."/>
            <person name="Glavina del Rio T."/>
            <person name="Dalin E."/>
            <person name="Tice H."/>
            <person name="Bruce D."/>
            <person name="Goodwin L."/>
            <person name="Pitluck S."/>
            <person name="Munk A.C."/>
            <person name="Brettin T."/>
            <person name="Detter J.C."/>
            <person name="Han C."/>
            <person name="Tapia R."/>
            <person name="Schmutz J."/>
            <person name="Larimer F."/>
            <person name="Land M."/>
            <person name="Hauser L."/>
            <person name="Challacombe J.F."/>
            <person name="Green L."/>
            <person name="Lindler L.E."/>
            <person name="Nikolich M.P."/>
            <person name="Richardson P."/>
        </authorList>
    </citation>
    <scope>NUCLEOTIDE SEQUENCE [LARGE SCALE GENOMIC DNA]</scope>
    <source>
        <strain>PB1/+</strain>
    </source>
</reference>
<dbReference type="EC" id="3.4.11.-" evidence="1"/>
<dbReference type="EMBL" id="CP001048">
    <property type="protein sequence ID" value="ACC88697.1"/>
    <property type="molecule type" value="Genomic_DNA"/>
</dbReference>
<dbReference type="RefSeq" id="WP_002211042.1">
    <property type="nucleotide sequence ID" value="NZ_CP009780.1"/>
</dbReference>
<dbReference type="SMR" id="B2K0C8"/>
<dbReference type="GeneID" id="57976845"/>
<dbReference type="KEGG" id="ypb:YPTS_1730"/>
<dbReference type="PATRIC" id="fig|502801.10.peg.1106"/>
<dbReference type="GO" id="GO:0005829">
    <property type="term" value="C:cytosol"/>
    <property type="evidence" value="ECO:0007669"/>
    <property type="project" value="TreeGrafter"/>
</dbReference>
<dbReference type="GO" id="GO:0004177">
    <property type="term" value="F:aminopeptidase activity"/>
    <property type="evidence" value="ECO:0007669"/>
    <property type="project" value="UniProtKB-UniRule"/>
</dbReference>
<dbReference type="GO" id="GO:0008237">
    <property type="term" value="F:metallopeptidase activity"/>
    <property type="evidence" value="ECO:0007669"/>
    <property type="project" value="UniProtKB-UniRule"/>
</dbReference>
<dbReference type="GO" id="GO:0008270">
    <property type="term" value="F:zinc ion binding"/>
    <property type="evidence" value="ECO:0007669"/>
    <property type="project" value="UniProtKB-UniRule"/>
</dbReference>
<dbReference type="GO" id="GO:0006508">
    <property type="term" value="P:proteolysis"/>
    <property type="evidence" value="ECO:0007669"/>
    <property type="project" value="UniProtKB-KW"/>
</dbReference>
<dbReference type="CDD" id="cd20169">
    <property type="entry name" value="Peptidase_M90_mtfA"/>
    <property type="match status" value="1"/>
</dbReference>
<dbReference type="FunFam" id="1.10.472.150:FF:000001">
    <property type="entry name" value="Protein MtfA"/>
    <property type="match status" value="1"/>
</dbReference>
<dbReference type="FunFam" id="3.40.390.10:FF:000012">
    <property type="entry name" value="Protein MtfA"/>
    <property type="match status" value="1"/>
</dbReference>
<dbReference type="Gene3D" id="3.40.390.10">
    <property type="entry name" value="Collagenase (Catalytic Domain)"/>
    <property type="match status" value="1"/>
</dbReference>
<dbReference type="Gene3D" id="1.10.472.150">
    <property type="entry name" value="Glucose-regulated metallo-peptidase M90, N-terminal domain"/>
    <property type="match status" value="1"/>
</dbReference>
<dbReference type="HAMAP" id="MF_01593">
    <property type="entry name" value="MtfA"/>
    <property type="match status" value="1"/>
</dbReference>
<dbReference type="InterPro" id="IPR024079">
    <property type="entry name" value="MetalloPept_cat_dom_sf"/>
</dbReference>
<dbReference type="InterPro" id="IPR057256">
    <property type="entry name" value="MtfA_enterob"/>
</dbReference>
<dbReference type="InterPro" id="IPR010384">
    <property type="entry name" value="MtfA_fam"/>
</dbReference>
<dbReference type="InterPro" id="IPR042252">
    <property type="entry name" value="MtfA_N"/>
</dbReference>
<dbReference type="NCBIfam" id="NF011939">
    <property type="entry name" value="PRK15410.1"/>
    <property type="match status" value="1"/>
</dbReference>
<dbReference type="PANTHER" id="PTHR30164">
    <property type="entry name" value="MTFA PEPTIDASE"/>
    <property type="match status" value="1"/>
</dbReference>
<dbReference type="PANTHER" id="PTHR30164:SF2">
    <property type="entry name" value="PROTEIN MTFA"/>
    <property type="match status" value="1"/>
</dbReference>
<dbReference type="Pfam" id="PF06167">
    <property type="entry name" value="Peptidase_M90"/>
    <property type="match status" value="1"/>
</dbReference>
<dbReference type="SUPFAM" id="SSF55486">
    <property type="entry name" value="Metalloproteases ('zincins'), catalytic domain"/>
    <property type="match status" value="1"/>
</dbReference>
<name>MTFA_YERPB</name>
<proteinExistence type="inferred from homology"/>
<gene>
    <name evidence="1" type="primary">mtfA</name>
    <name type="ordered locus">YPTS_1730</name>
</gene>
<feature type="chain" id="PRO_1000147850" description="Mlc titration factor A">
    <location>
        <begin position="1"/>
        <end position="270"/>
    </location>
</feature>
<feature type="binding site" evidence="1">
    <location>
        <position position="111"/>
    </location>
    <ligand>
        <name>Zn(2+)</name>
        <dbReference type="ChEBI" id="CHEBI:29105"/>
    </ligand>
</feature>
<feature type="binding site" evidence="1">
    <location>
        <position position="148"/>
    </location>
    <ligand>
        <name>Zn(2+)</name>
        <dbReference type="ChEBI" id="CHEBI:29105"/>
    </ligand>
</feature>
<feature type="binding site" evidence="1">
    <location>
        <position position="152"/>
    </location>
    <ligand>
        <name>Zn(2+)</name>
        <dbReference type="ChEBI" id="CHEBI:29105"/>
    </ligand>
</feature>
<feature type="binding site" evidence="1">
    <location>
        <position position="211"/>
    </location>
    <ligand>
        <name>Zn(2+)</name>
        <dbReference type="ChEBI" id="CHEBI:29105"/>
    </ligand>
</feature>
<sequence length="270" mass="30659">MIKWLWKANKPQAEMLAQWHEALNIPLLAPLNEPEQQRLVSVASQLLQQKRFIPLQGLILTPLMQARLALLFALPVMELGAKWLDGFHEVLIYPSPFIVAEDWQDDLGLVHSGQSVQSGQSWEQGPIVLNWQDIQDSFDLSGFNLVIHEAAHKLDMRNGGHSNGVPPIAMRDVAVWEHDLHHAMDNIQDEIDMVGVEGASMDAYAASNPAECFAVLSEYFFSAPELLEGRFPAVYQHFCRFYRQDPLARLKRWENSLADNPPPENTHSHR</sequence>
<accession>B2K0C8</accession>